<protein>
    <recommendedName>
        <fullName evidence="1">UPF0735 ACT domain-containing protein FN1487</fullName>
    </recommendedName>
</protein>
<gene>
    <name type="ordered locus">FN1487</name>
</gene>
<reference key="1">
    <citation type="journal article" date="2002" name="J. Bacteriol.">
        <title>Genome sequence and analysis of the oral bacterium Fusobacterium nucleatum strain ATCC 25586.</title>
        <authorList>
            <person name="Kapatral V."/>
            <person name="Anderson I."/>
            <person name="Ivanova N."/>
            <person name="Reznik G."/>
            <person name="Los T."/>
            <person name="Lykidis A."/>
            <person name="Bhattacharyya A."/>
            <person name="Bartman A."/>
            <person name="Gardner W."/>
            <person name="Grechkin G."/>
            <person name="Zhu L."/>
            <person name="Vasieva O."/>
            <person name="Chu L."/>
            <person name="Kogan Y."/>
            <person name="Chaga O."/>
            <person name="Goltsman E."/>
            <person name="Bernal A."/>
            <person name="Larsen N."/>
            <person name="D'Souza M."/>
            <person name="Walunas T."/>
            <person name="Pusch G."/>
            <person name="Haselkorn R."/>
            <person name="Fonstein M."/>
            <person name="Kyrpides N.C."/>
            <person name="Overbeek R."/>
        </authorList>
    </citation>
    <scope>NUCLEOTIDE SEQUENCE [LARGE SCALE GENOMIC DNA]</scope>
    <source>
        <strain>ATCC 25586 / DSM 15643 / BCRC 10681 / CIP 101130 / JCM 8532 / KCTC 2640 / LMG 13131 / VPI 4355</strain>
    </source>
</reference>
<proteinExistence type="inferred from homology"/>
<name>Y1487_FUSNN</name>
<feature type="chain" id="PRO_0000206472" description="UPF0735 ACT domain-containing protein FN1487">
    <location>
        <begin position="1"/>
        <end position="153"/>
    </location>
</feature>
<feature type="domain" description="ACT" evidence="1">
    <location>
        <begin position="76"/>
        <end position="152"/>
    </location>
</feature>
<sequence>MAFKKKDTENKEFYIVDKRILPKSIQNVIKVNDLILKTKMSKYSAIKKVGISRSTYYKYKDFIKPFYEGGEDRIYSLHLSLKDRVGILSDVLDVIAREKISILTVVQNMAVDGVAKSTILIKLSESMQKKVDKIISKIGKVEGIADIRITGSN</sequence>
<organism>
    <name type="scientific">Fusobacterium nucleatum subsp. nucleatum (strain ATCC 25586 / DSM 15643 / BCRC 10681 / CIP 101130 / JCM 8532 / KCTC 2640 / LMG 13131 / VPI 4355)</name>
    <dbReference type="NCBI Taxonomy" id="190304"/>
    <lineage>
        <taxon>Bacteria</taxon>
        <taxon>Fusobacteriati</taxon>
        <taxon>Fusobacteriota</taxon>
        <taxon>Fusobacteriia</taxon>
        <taxon>Fusobacteriales</taxon>
        <taxon>Fusobacteriaceae</taxon>
        <taxon>Fusobacterium</taxon>
    </lineage>
</organism>
<dbReference type="EMBL" id="AE009951">
    <property type="protein sequence ID" value="AAL95681.1"/>
    <property type="molecule type" value="Genomic_DNA"/>
</dbReference>
<dbReference type="RefSeq" id="NP_604381.1">
    <property type="nucleotide sequence ID" value="NC_003454.1"/>
</dbReference>
<dbReference type="RefSeq" id="WP_005902336.1">
    <property type="nucleotide sequence ID" value="NZ_OZ209243.1"/>
</dbReference>
<dbReference type="FunCoup" id="Q8RDM5">
    <property type="interactions" value="33"/>
</dbReference>
<dbReference type="STRING" id="190304.FN1487"/>
<dbReference type="PaxDb" id="190304-FN1487"/>
<dbReference type="EnsemblBacteria" id="AAL95681">
    <property type="protein sequence ID" value="AAL95681"/>
    <property type="gene ID" value="FN1487"/>
</dbReference>
<dbReference type="KEGG" id="fnu:FN1487"/>
<dbReference type="PATRIC" id="fig|190304.8.peg.2047"/>
<dbReference type="eggNOG" id="COG4492">
    <property type="taxonomic scope" value="Bacteria"/>
</dbReference>
<dbReference type="HOGENOM" id="CLU_128147_0_0_0"/>
<dbReference type="InParanoid" id="Q8RDM5"/>
<dbReference type="BioCyc" id="FNUC190304:G1FZS-2055-MONOMER"/>
<dbReference type="Proteomes" id="UP000002521">
    <property type="component" value="Chromosome"/>
</dbReference>
<dbReference type="Gene3D" id="3.30.70.260">
    <property type="match status" value="1"/>
</dbReference>
<dbReference type="HAMAP" id="MF_00707">
    <property type="entry name" value="UPF0735"/>
    <property type="match status" value="1"/>
</dbReference>
<dbReference type="InterPro" id="IPR045865">
    <property type="entry name" value="ACT-like_dom_sf"/>
</dbReference>
<dbReference type="InterPro" id="IPR002912">
    <property type="entry name" value="ACT_dom"/>
</dbReference>
<dbReference type="InterPro" id="IPR008310">
    <property type="entry name" value="UPF0735_ACT_dom-cont"/>
</dbReference>
<dbReference type="NCBIfam" id="NF003361">
    <property type="entry name" value="PRK04435.1"/>
    <property type="match status" value="1"/>
</dbReference>
<dbReference type="Pfam" id="PF13291">
    <property type="entry name" value="ACT_4"/>
    <property type="match status" value="1"/>
</dbReference>
<dbReference type="PIRSF" id="PIRSF025624">
    <property type="entry name" value="ACT_PheB"/>
    <property type="match status" value="1"/>
</dbReference>
<dbReference type="SUPFAM" id="SSF55021">
    <property type="entry name" value="ACT-like"/>
    <property type="match status" value="1"/>
</dbReference>
<dbReference type="PROSITE" id="PS51671">
    <property type="entry name" value="ACT"/>
    <property type="match status" value="1"/>
</dbReference>
<comment type="similarity">
    <text evidence="1">Belongs to the UPF0735 family.</text>
</comment>
<accession>Q8RDM5</accession>
<evidence type="ECO:0000255" key="1">
    <source>
        <dbReference type="HAMAP-Rule" id="MF_00707"/>
    </source>
</evidence>
<keyword id="KW-1185">Reference proteome</keyword>